<evidence type="ECO:0000250" key="1"/>
<evidence type="ECO:0000255" key="2">
    <source>
        <dbReference type="HAMAP-Rule" id="MF_00103"/>
    </source>
</evidence>
<organism>
    <name type="scientific">Rickettsia felis (strain ATCC VR-1525 / URRWXCal2)</name>
    <name type="common">Rickettsia azadi</name>
    <dbReference type="NCBI Taxonomy" id="315456"/>
    <lineage>
        <taxon>Bacteria</taxon>
        <taxon>Pseudomonadati</taxon>
        <taxon>Pseudomonadota</taxon>
        <taxon>Alphaproteobacteria</taxon>
        <taxon>Rickettsiales</taxon>
        <taxon>Rickettsiaceae</taxon>
        <taxon>Rickettsieae</taxon>
        <taxon>Rickettsia</taxon>
        <taxon>spotted fever group</taxon>
    </lineage>
</organism>
<name>FPG_RICFE</name>
<dbReference type="EC" id="3.2.2.23" evidence="2"/>
<dbReference type="EC" id="4.2.99.18" evidence="2"/>
<dbReference type="EMBL" id="CP000053">
    <property type="protein sequence ID" value="AAY61093.1"/>
    <property type="molecule type" value="Genomic_DNA"/>
</dbReference>
<dbReference type="SMR" id="Q4UMW5"/>
<dbReference type="STRING" id="315456.RF_0242"/>
<dbReference type="KEGG" id="rfe:RF_0242"/>
<dbReference type="eggNOG" id="COG0266">
    <property type="taxonomic scope" value="Bacteria"/>
</dbReference>
<dbReference type="HOGENOM" id="CLU_038423_1_1_5"/>
<dbReference type="OrthoDB" id="9800855at2"/>
<dbReference type="Proteomes" id="UP000008548">
    <property type="component" value="Chromosome"/>
</dbReference>
<dbReference type="GO" id="GO:0034039">
    <property type="term" value="F:8-oxo-7,8-dihydroguanine DNA N-glycosylase activity"/>
    <property type="evidence" value="ECO:0007669"/>
    <property type="project" value="TreeGrafter"/>
</dbReference>
<dbReference type="GO" id="GO:0140078">
    <property type="term" value="F:class I DNA-(apurinic or apyrimidinic site) endonuclease activity"/>
    <property type="evidence" value="ECO:0007669"/>
    <property type="project" value="UniProtKB-EC"/>
</dbReference>
<dbReference type="GO" id="GO:0003684">
    <property type="term" value="F:damaged DNA binding"/>
    <property type="evidence" value="ECO:0007669"/>
    <property type="project" value="InterPro"/>
</dbReference>
<dbReference type="GO" id="GO:0008270">
    <property type="term" value="F:zinc ion binding"/>
    <property type="evidence" value="ECO:0007669"/>
    <property type="project" value="UniProtKB-UniRule"/>
</dbReference>
<dbReference type="GO" id="GO:0006284">
    <property type="term" value="P:base-excision repair"/>
    <property type="evidence" value="ECO:0007669"/>
    <property type="project" value="InterPro"/>
</dbReference>
<dbReference type="CDD" id="cd08966">
    <property type="entry name" value="EcFpg-like_N"/>
    <property type="match status" value="1"/>
</dbReference>
<dbReference type="FunFam" id="1.10.8.50:FF:000003">
    <property type="entry name" value="Formamidopyrimidine-DNA glycosylase"/>
    <property type="match status" value="1"/>
</dbReference>
<dbReference type="Gene3D" id="1.10.8.50">
    <property type="match status" value="1"/>
</dbReference>
<dbReference type="Gene3D" id="3.20.190.10">
    <property type="entry name" value="MutM-like, N-terminal"/>
    <property type="match status" value="1"/>
</dbReference>
<dbReference type="HAMAP" id="MF_00103">
    <property type="entry name" value="Fapy_DNA_glycosyl"/>
    <property type="match status" value="1"/>
</dbReference>
<dbReference type="InterPro" id="IPR015886">
    <property type="entry name" value="DNA_glyclase/AP_lyase_DNA-bd"/>
</dbReference>
<dbReference type="InterPro" id="IPR015887">
    <property type="entry name" value="DNA_glyclase_Znf_dom_DNA_BS"/>
</dbReference>
<dbReference type="InterPro" id="IPR020629">
    <property type="entry name" value="Formamido-pyr_DNA_Glyclase"/>
</dbReference>
<dbReference type="InterPro" id="IPR012319">
    <property type="entry name" value="FPG_cat"/>
</dbReference>
<dbReference type="InterPro" id="IPR035937">
    <property type="entry name" value="MutM-like_N-ter"/>
</dbReference>
<dbReference type="InterPro" id="IPR010979">
    <property type="entry name" value="Ribosomal_uS13-like_H2TH"/>
</dbReference>
<dbReference type="InterPro" id="IPR000214">
    <property type="entry name" value="Znf_DNA_glyclase/AP_lyase"/>
</dbReference>
<dbReference type="InterPro" id="IPR010663">
    <property type="entry name" value="Znf_FPG/IleRS"/>
</dbReference>
<dbReference type="NCBIfam" id="TIGR00577">
    <property type="entry name" value="fpg"/>
    <property type="match status" value="1"/>
</dbReference>
<dbReference type="NCBIfam" id="NF002211">
    <property type="entry name" value="PRK01103.1"/>
    <property type="match status" value="1"/>
</dbReference>
<dbReference type="PANTHER" id="PTHR22993">
    <property type="entry name" value="FORMAMIDOPYRIMIDINE-DNA GLYCOSYLASE"/>
    <property type="match status" value="1"/>
</dbReference>
<dbReference type="PANTHER" id="PTHR22993:SF9">
    <property type="entry name" value="FORMAMIDOPYRIMIDINE-DNA GLYCOSYLASE"/>
    <property type="match status" value="1"/>
</dbReference>
<dbReference type="Pfam" id="PF01149">
    <property type="entry name" value="Fapy_DNA_glyco"/>
    <property type="match status" value="1"/>
</dbReference>
<dbReference type="Pfam" id="PF06831">
    <property type="entry name" value="H2TH"/>
    <property type="match status" value="1"/>
</dbReference>
<dbReference type="Pfam" id="PF06827">
    <property type="entry name" value="zf-FPG_IleRS"/>
    <property type="match status" value="1"/>
</dbReference>
<dbReference type="SMART" id="SM00898">
    <property type="entry name" value="Fapy_DNA_glyco"/>
    <property type="match status" value="1"/>
</dbReference>
<dbReference type="SMART" id="SM01232">
    <property type="entry name" value="H2TH"/>
    <property type="match status" value="1"/>
</dbReference>
<dbReference type="SUPFAM" id="SSF57716">
    <property type="entry name" value="Glucocorticoid receptor-like (DNA-binding domain)"/>
    <property type="match status" value="1"/>
</dbReference>
<dbReference type="SUPFAM" id="SSF81624">
    <property type="entry name" value="N-terminal domain of MutM-like DNA repair proteins"/>
    <property type="match status" value="1"/>
</dbReference>
<dbReference type="SUPFAM" id="SSF46946">
    <property type="entry name" value="S13-like H2TH domain"/>
    <property type="match status" value="1"/>
</dbReference>
<dbReference type="PROSITE" id="PS51068">
    <property type="entry name" value="FPG_CAT"/>
    <property type="match status" value="1"/>
</dbReference>
<dbReference type="PROSITE" id="PS01242">
    <property type="entry name" value="ZF_FPG_1"/>
    <property type="match status" value="1"/>
</dbReference>
<dbReference type="PROSITE" id="PS51066">
    <property type="entry name" value="ZF_FPG_2"/>
    <property type="match status" value="1"/>
</dbReference>
<protein>
    <recommendedName>
        <fullName evidence="2">Formamidopyrimidine-DNA glycosylase</fullName>
        <shortName evidence="2">Fapy-DNA glycosylase</shortName>
        <ecNumber evidence="2">3.2.2.23</ecNumber>
    </recommendedName>
    <alternativeName>
        <fullName evidence="2">DNA-(apurinic or apyrimidinic site) lyase MutM</fullName>
        <shortName evidence="2">AP lyase MutM</shortName>
        <ecNumber evidence="2">4.2.99.18</ecNumber>
    </alternativeName>
</protein>
<proteinExistence type="inferred from homology"/>
<gene>
    <name evidence="2" type="primary">mutM</name>
    <name evidence="2" type="synonym">fpg</name>
    <name type="ordered locus">RF_0242</name>
</gene>
<feature type="initiator methionine" description="Removed" evidence="1">
    <location>
        <position position="1"/>
    </location>
</feature>
<feature type="chain" id="PRO_0000228466" description="Formamidopyrimidine-DNA glycosylase">
    <location>
        <begin position="2"/>
        <end position="276"/>
    </location>
</feature>
<feature type="zinc finger region" description="FPG-type" evidence="2">
    <location>
        <begin position="238"/>
        <end position="272"/>
    </location>
</feature>
<feature type="active site" description="Schiff-base intermediate with DNA" evidence="2">
    <location>
        <position position="2"/>
    </location>
</feature>
<feature type="active site" description="Proton donor" evidence="2">
    <location>
        <position position="3"/>
    </location>
</feature>
<feature type="active site" description="Proton donor; for beta-elimination activity" evidence="2">
    <location>
        <position position="58"/>
    </location>
</feature>
<feature type="active site" description="Proton donor; for delta-elimination activity" evidence="2">
    <location>
        <position position="262"/>
    </location>
</feature>
<feature type="binding site" evidence="2">
    <location>
        <position position="92"/>
    </location>
    <ligand>
        <name>DNA</name>
        <dbReference type="ChEBI" id="CHEBI:16991"/>
    </ligand>
</feature>
<feature type="binding site" evidence="2">
    <location>
        <position position="111"/>
    </location>
    <ligand>
        <name>DNA</name>
        <dbReference type="ChEBI" id="CHEBI:16991"/>
    </ligand>
</feature>
<feature type="binding site" evidence="2">
    <location>
        <position position="153"/>
    </location>
    <ligand>
        <name>DNA</name>
        <dbReference type="ChEBI" id="CHEBI:16991"/>
    </ligand>
</feature>
<comment type="function">
    <text evidence="2">Involved in base excision repair of DNA damaged by oxidation or by mutagenic agents. Acts as a DNA glycosylase that recognizes and removes damaged bases. Has a preference for oxidized purines, such as 7,8-dihydro-8-oxoguanine (8-oxoG). Has AP (apurinic/apyrimidinic) lyase activity and introduces nicks in the DNA strand. Cleaves the DNA backbone by beta-delta elimination to generate a single-strand break at the site of the removed base with both 3'- and 5'-phosphates.</text>
</comment>
<comment type="catalytic activity">
    <reaction evidence="2">
        <text>Hydrolysis of DNA containing ring-opened 7-methylguanine residues, releasing 2,6-diamino-4-hydroxy-5-(N-methyl)formamidopyrimidine.</text>
        <dbReference type="EC" id="3.2.2.23"/>
    </reaction>
</comment>
<comment type="catalytic activity">
    <reaction evidence="2">
        <text>2'-deoxyribonucleotide-(2'-deoxyribose 5'-phosphate)-2'-deoxyribonucleotide-DNA = a 3'-end 2'-deoxyribonucleotide-(2,3-dehydro-2,3-deoxyribose 5'-phosphate)-DNA + a 5'-end 5'-phospho-2'-deoxyribonucleoside-DNA + H(+)</text>
        <dbReference type="Rhea" id="RHEA:66592"/>
        <dbReference type="Rhea" id="RHEA-COMP:13180"/>
        <dbReference type="Rhea" id="RHEA-COMP:16897"/>
        <dbReference type="Rhea" id="RHEA-COMP:17067"/>
        <dbReference type="ChEBI" id="CHEBI:15378"/>
        <dbReference type="ChEBI" id="CHEBI:136412"/>
        <dbReference type="ChEBI" id="CHEBI:157695"/>
        <dbReference type="ChEBI" id="CHEBI:167181"/>
        <dbReference type="EC" id="4.2.99.18"/>
    </reaction>
</comment>
<comment type="cofactor">
    <cofactor evidence="2">
        <name>Zn(2+)</name>
        <dbReference type="ChEBI" id="CHEBI:29105"/>
    </cofactor>
    <text evidence="2">Binds 1 zinc ion per subunit.</text>
</comment>
<comment type="subunit">
    <text evidence="2">Monomer.</text>
</comment>
<comment type="similarity">
    <text evidence="2">Belongs to the FPG family.</text>
</comment>
<sequence length="276" mass="31773">MPELPEVETLKNSLKDKLIELIIENVELKRDNLRYKLSPLLASEISNTNILDVRRRAKYLIIDFNNDYSLIVHLGMSGRFTLQPSNYETKKHDHVIFDLSNGEKLIFNDTRRFGMIYNFKTNFLEKELFNNLGVEPLSDSLTLEYLKSKLITRKIPIKNLIMDNRIIVGVGNIYASESLYLARIHPDKLGSNLRDDEIESLIKSIREVLAKAITAGGTTLKDFVNGDNKPGYFTQQLTVYGRERQNCLNCSSTIIKTKHSGRSTFYCRTCQYSEFT</sequence>
<keyword id="KW-0227">DNA damage</keyword>
<keyword id="KW-0234">DNA repair</keyword>
<keyword id="KW-0238">DNA-binding</keyword>
<keyword id="KW-0326">Glycosidase</keyword>
<keyword id="KW-0378">Hydrolase</keyword>
<keyword id="KW-0456">Lyase</keyword>
<keyword id="KW-0479">Metal-binding</keyword>
<keyword id="KW-0511">Multifunctional enzyme</keyword>
<keyword id="KW-0862">Zinc</keyword>
<keyword id="KW-0863">Zinc-finger</keyword>
<reference key="1">
    <citation type="journal article" date="2005" name="PLoS Biol.">
        <title>The genome sequence of Rickettsia felis identifies the first putative conjugative plasmid in an obligate intracellular parasite.</title>
        <authorList>
            <person name="Ogata H."/>
            <person name="Renesto P."/>
            <person name="Audic S."/>
            <person name="Robert C."/>
            <person name="Blanc G."/>
            <person name="Fournier P.-E."/>
            <person name="Parinello H."/>
            <person name="Claverie J.-M."/>
            <person name="Raoult D."/>
        </authorList>
    </citation>
    <scope>NUCLEOTIDE SEQUENCE [LARGE SCALE GENOMIC DNA]</scope>
    <source>
        <strain>ATCC VR-1525 / URRWXCal2</strain>
    </source>
</reference>
<accession>Q4UMW5</accession>